<organism>
    <name type="scientific">Huperzia lucidula</name>
    <name type="common">Shining clubmoss</name>
    <name type="synonym">Lycopodium lucidulum</name>
    <dbReference type="NCBI Taxonomy" id="37429"/>
    <lineage>
        <taxon>Eukaryota</taxon>
        <taxon>Viridiplantae</taxon>
        <taxon>Streptophyta</taxon>
        <taxon>Embryophyta</taxon>
        <taxon>Tracheophyta</taxon>
        <taxon>Lycopodiopsida</taxon>
        <taxon>Lycopodiales</taxon>
        <taxon>Lycopodiaceae</taxon>
        <taxon>Huperzioideae</taxon>
        <taxon>Huperzia</taxon>
    </lineage>
</organism>
<protein>
    <recommendedName>
        <fullName evidence="1">Photosystem II reaction center protein M</fullName>
        <shortName evidence="1">PSII-M</shortName>
    </recommendedName>
</protein>
<name>PSBM_HUPLU</name>
<dbReference type="EMBL" id="AY660566">
    <property type="protein sequence ID" value="AAT80750.1"/>
    <property type="molecule type" value="Genomic_DNA"/>
</dbReference>
<dbReference type="RefSeq" id="YP_209554.1">
    <property type="nucleotide sequence ID" value="NC_006861.1"/>
</dbReference>
<dbReference type="SMR" id="Q5SCY3"/>
<dbReference type="GeneID" id="3283801"/>
<dbReference type="GO" id="GO:0009535">
    <property type="term" value="C:chloroplast thylakoid membrane"/>
    <property type="evidence" value="ECO:0007669"/>
    <property type="project" value="UniProtKB-SubCell"/>
</dbReference>
<dbReference type="GO" id="GO:0009523">
    <property type="term" value="C:photosystem II"/>
    <property type="evidence" value="ECO:0007669"/>
    <property type="project" value="UniProtKB-KW"/>
</dbReference>
<dbReference type="GO" id="GO:0019684">
    <property type="term" value="P:photosynthesis, light reaction"/>
    <property type="evidence" value="ECO:0007669"/>
    <property type="project" value="InterPro"/>
</dbReference>
<dbReference type="HAMAP" id="MF_00438">
    <property type="entry name" value="PSII_PsbM"/>
    <property type="match status" value="1"/>
</dbReference>
<dbReference type="InterPro" id="IPR007826">
    <property type="entry name" value="PSII_PsbM"/>
</dbReference>
<dbReference type="InterPro" id="IPR037269">
    <property type="entry name" value="PSII_PsbM_sf"/>
</dbReference>
<dbReference type="NCBIfam" id="TIGR03038">
    <property type="entry name" value="PS_II_psbM"/>
    <property type="match status" value="1"/>
</dbReference>
<dbReference type="PANTHER" id="PTHR35774">
    <property type="entry name" value="PHOTOSYSTEM II REACTION CENTER PROTEIN M"/>
    <property type="match status" value="1"/>
</dbReference>
<dbReference type="PANTHER" id="PTHR35774:SF1">
    <property type="entry name" value="PHOTOSYSTEM II REACTION CENTER PROTEIN M"/>
    <property type="match status" value="1"/>
</dbReference>
<dbReference type="Pfam" id="PF05151">
    <property type="entry name" value="PsbM"/>
    <property type="match status" value="1"/>
</dbReference>
<dbReference type="SUPFAM" id="SSF161033">
    <property type="entry name" value="Photosystem II reaction center protein M, PsbM"/>
    <property type="match status" value="1"/>
</dbReference>
<keyword id="KW-0150">Chloroplast</keyword>
<keyword id="KW-0472">Membrane</keyword>
<keyword id="KW-0602">Photosynthesis</keyword>
<keyword id="KW-0604">Photosystem II</keyword>
<keyword id="KW-0934">Plastid</keyword>
<keyword id="KW-0674">Reaction center</keyword>
<keyword id="KW-0793">Thylakoid</keyword>
<keyword id="KW-0812">Transmembrane</keyword>
<keyword id="KW-1133">Transmembrane helix</keyword>
<feature type="chain" id="PRO_0000217556" description="Photosystem II reaction center protein M">
    <location>
        <begin position="1"/>
        <end position="34"/>
    </location>
</feature>
<feature type="transmembrane region" description="Helical" evidence="1">
    <location>
        <begin position="5"/>
        <end position="25"/>
    </location>
</feature>
<accession>Q5SCY3</accession>
<comment type="function">
    <text evidence="1">One of the components of the core complex of photosystem II (PSII). PSII is a light-driven water:plastoquinone oxidoreductase that uses light energy to abstract electrons from H(2)O, generating O(2) and a proton gradient subsequently used for ATP formation. It consists of a core antenna complex that captures photons, and an electron transfer chain that converts photonic excitation into a charge separation. This subunit is found at the monomer-monomer interface.</text>
</comment>
<comment type="subunit">
    <text evidence="1">PSII is composed of 1 copy each of membrane proteins PsbA, PsbB, PsbC, PsbD, PsbE, PsbF, PsbH, PsbI, PsbJ, PsbK, PsbL, PsbM, PsbT, PsbX, PsbY, PsbZ, Psb30/Ycf12, at least 3 peripheral proteins of the oxygen-evolving complex and a large number of cofactors. It forms dimeric complexes.</text>
</comment>
<comment type="subcellular location">
    <subcellularLocation>
        <location evidence="1">Plastid</location>
        <location evidence="1">Chloroplast thylakoid membrane</location>
        <topology evidence="1">Single-pass membrane protein</topology>
    </subcellularLocation>
</comment>
<comment type="similarity">
    <text evidence="1">Belongs to the PsbM family.</text>
</comment>
<gene>
    <name evidence="1" type="primary">psbM</name>
</gene>
<evidence type="ECO:0000255" key="1">
    <source>
        <dbReference type="HAMAP-Rule" id="MF_00438"/>
    </source>
</evidence>
<sequence>MEVNILAFIATALFILIPTAFSLILYVQTASQNN</sequence>
<proteinExistence type="inferred from homology"/>
<geneLocation type="chloroplast"/>
<reference key="1">
    <citation type="journal article" date="2005" name="Gene">
        <title>The first complete chloroplast genome sequence of a lycophyte, Huperzia lucidula (Lycopodiaceae).</title>
        <authorList>
            <person name="Wolf P.G."/>
            <person name="Karol K.G."/>
            <person name="Mandoli D.F."/>
            <person name="Kuehl J.V."/>
            <person name="Arumuganathan K."/>
            <person name="Ellis M.W."/>
            <person name="Mishler B.D."/>
            <person name="Kelch D.G."/>
            <person name="Olmstead R.G."/>
            <person name="Boore J.L."/>
        </authorList>
    </citation>
    <scope>NUCLEOTIDE SEQUENCE [LARGE SCALE GENOMIC DNA]</scope>
</reference>